<proteinExistence type="evidence at protein level"/>
<dbReference type="PIR" id="B60071">
    <property type="entry name" value="B60071"/>
</dbReference>
<dbReference type="SMR" id="P84488"/>
<dbReference type="eggNOG" id="ENOG502QVTA">
    <property type="taxonomic scope" value="Eukaryota"/>
</dbReference>
<dbReference type="HOGENOM" id="CLU_133877_1_0_1"/>
<dbReference type="InParanoid" id="P84488"/>
<dbReference type="Proteomes" id="UP000006718">
    <property type="component" value="Unassembled WGS sequence"/>
</dbReference>
<dbReference type="GO" id="GO:0005576">
    <property type="term" value="C:extracellular region"/>
    <property type="evidence" value="ECO:0007669"/>
    <property type="project" value="UniProtKB-SubCell"/>
</dbReference>
<dbReference type="GO" id="GO:0005184">
    <property type="term" value="F:neuropeptide hormone activity"/>
    <property type="evidence" value="ECO:0000250"/>
    <property type="project" value="UniProtKB"/>
</dbReference>
<dbReference type="GO" id="GO:0031891">
    <property type="term" value="F:type 1 vasoactive intestinal polypeptide receptor binding"/>
    <property type="evidence" value="ECO:0000250"/>
    <property type="project" value="UniProtKB"/>
</dbReference>
<dbReference type="GO" id="GO:0007189">
    <property type="term" value="P:adenylate cyclase-activating G protein-coupled receptor signaling pathway"/>
    <property type="evidence" value="ECO:0000250"/>
    <property type="project" value="UniProtKB"/>
</dbReference>
<dbReference type="GO" id="GO:0048255">
    <property type="term" value="P:mRNA stabilization"/>
    <property type="evidence" value="ECO:0000250"/>
    <property type="project" value="AgBase"/>
</dbReference>
<dbReference type="GO" id="GO:0045732">
    <property type="term" value="P:positive regulation of protein catabolic process"/>
    <property type="evidence" value="ECO:0007669"/>
    <property type="project" value="UniProtKB-ARBA"/>
</dbReference>
<dbReference type="GO" id="GO:0070459">
    <property type="term" value="P:prolactin secretion"/>
    <property type="evidence" value="ECO:0000250"/>
    <property type="project" value="AgBase"/>
</dbReference>
<dbReference type="GO" id="GO:0032880">
    <property type="term" value="P:regulation of protein localization"/>
    <property type="evidence" value="ECO:0007669"/>
    <property type="project" value="UniProtKB-ARBA"/>
</dbReference>
<dbReference type="Gene3D" id="6.10.250.590">
    <property type="match status" value="1"/>
</dbReference>
<dbReference type="InterPro" id="IPR000532">
    <property type="entry name" value="Glucagon_GIP_secretin_VIP"/>
</dbReference>
<dbReference type="InterPro" id="IPR046963">
    <property type="entry name" value="VIP/GHRH-like"/>
</dbReference>
<dbReference type="PANTHER" id="PTHR11213">
    <property type="entry name" value="GLUCAGON-FAMILY NEUROPEPTIDE"/>
    <property type="match status" value="1"/>
</dbReference>
<dbReference type="PANTHER" id="PTHR11213:SF5">
    <property type="entry name" value="VIP PEPTIDES"/>
    <property type="match status" value="1"/>
</dbReference>
<dbReference type="Pfam" id="PF00123">
    <property type="entry name" value="Hormone_2"/>
    <property type="match status" value="1"/>
</dbReference>
<dbReference type="SMART" id="SM00070">
    <property type="entry name" value="GLUCA"/>
    <property type="match status" value="1"/>
</dbReference>
<dbReference type="PROSITE" id="PS00260">
    <property type="entry name" value="GLUCAGON"/>
    <property type="match status" value="1"/>
</dbReference>
<accession>P84488</accession>
<gene>
    <name type="primary">VIP</name>
</gene>
<feature type="peptide" id="PRO_0000043942" description="Vasoactive intestinal peptide">
    <location>
        <begin position="1"/>
        <end position="28"/>
    </location>
</feature>
<feature type="modified residue" description="Asparagine amide" evidence="1">
    <location>
        <position position="28"/>
    </location>
</feature>
<sequence length="28" mass="3327">HSDAVFTDNYTRLRKQMAVKKYLNSILN</sequence>
<name>VIP_MACMU</name>
<organism>
    <name type="scientific">Macaca mulatta</name>
    <name type="common">Rhesus macaque</name>
    <dbReference type="NCBI Taxonomy" id="9544"/>
    <lineage>
        <taxon>Eukaryota</taxon>
        <taxon>Metazoa</taxon>
        <taxon>Chordata</taxon>
        <taxon>Craniata</taxon>
        <taxon>Vertebrata</taxon>
        <taxon>Euteleostomi</taxon>
        <taxon>Mammalia</taxon>
        <taxon>Eutheria</taxon>
        <taxon>Euarchontoglires</taxon>
        <taxon>Primates</taxon>
        <taxon>Haplorrhini</taxon>
        <taxon>Catarrhini</taxon>
        <taxon>Cercopithecidae</taxon>
        <taxon>Cercopithecinae</taxon>
        <taxon>Macaca</taxon>
    </lineage>
</organism>
<comment type="function">
    <molecule>Vasoactive intestinal peptide</molecule>
    <text evidence="1">VIP is a neuropeptide involved in a diverse array of physiological processes through activating the PACAP subfamily of class B1 G protein-coupled receptors: VIP receptor 1 (VPR1) and VIP receptor 2 (VPR2). Abundantly expressed throughout the CNS and peripheral nervous systems where they primarily exert neuroprotective and immune modulatory roles (By similarity). Also causes vasodilation, lowers arterial blood pressure, stimulates myocardial contractility, increases glycogenolysis and relaxes the smooth muscle of trachea, stomach and gall bladder (By similarity).</text>
</comment>
<comment type="subcellular location">
    <subcellularLocation>
        <location>Secreted</location>
    </subcellularLocation>
</comment>
<comment type="similarity">
    <text evidence="2">Belongs to the glucagon family.</text>
</comment>
<keyword id="KW-0027">Amidation</keyword>
<keyword id="KW-0903">Direct protein sequencing</keyword>
<keyword id="KW-0372">Hormone</keyword>
<keyword id="KW-1185">Reference proteome</keyword>
<keyword id="KW-0964">Secreted</keyword>
<protein>
    <recommendedName>
        <fullName>Vasoactive intestinal peptide</fullName>
        <shortName>VIP</shortName>
    </recommendedName>
    <alternativeName>
        <fullName>Vasoactive intestinal polypeptide</fullName>
    </alternativeName>
</protein>
<reference key="1">
    <citation type="journal article" date="1991" name="Regul. Pept.">
        <title>Rhesus monkey gastroenteropancreatic hormones: relationship to human sequences.</title>
        <authorList>
            <person name="Yu J.-H."/>
            <person name="Xin Y."/>
            <person name="Eng J."/>
            <person name="Yalow R.S."/>
        </authorList>
    </citation>
    <scope>PROTEIN SEQUENCE</scope>
</reference>
<evidence type="ECO:0000250" key="1">
    <source>
        <dbReference type="UniProtKB" id="P01282"/>
    </source>
</evidence>
<evidence type="ECO:0000305" key="2"/>